<evidence type="ECO:0000255" key="1">
    <source>
        <dbReference type="HAMAP-Rule" id="MF_03175"/>
    </source>
</evidence>
<evidence type="ECO:0000305" key="2"/>
<dbReference type="EC" id="3.4.11.18" evidence="1"/>
<dbReference type="EMBL" id="AY224693">
    <property type="protein sequence ID" value="AAP51022.1"/>
    <property type="molecule type" value="Genomic_DNA"/>
</dbReference>
<dbReference type="EMBL" id="CP001951">
    <property type="protein sequence ID" value="ADM12396.1"/>
    <property type="molecule type" value="Genomic_DNA"/>
</dbReference>
<dbReference type="EMBL" id="AY339781">
    <property type="protein sequence ID" value="AAR04555.1"/>
    <property type="molecule type" value="Genomic_DNA"/>
</dbReference>
<dbReference type="RefSeq" id="XP_003073756.1">
    <property type="nucleotide sequence ID" value="XM_003073710.1"/>
</dbReference>
<dbReference type="SMR" id="Q6XMH7"/>
<dbReference type="KEGG" id="ein:Eint_100700"/>
<dbReference type="VEuPathDB" id="MicrosporidiaDB:Eint_100700"/>
<dbReference type="HOGENOM" id="CLU_015857_7_0_1"/>
<dbReference type="OrthoDB" id="7848262at2759"/>
<dbReference type="BRENDA" id="3.4.11.18">
    <property type="organism ID" value="8683"/>
</dbReference>
<dbReference type="Proteomes" id="UP000002313">
    <property type="component" value="Chromosome X"/>
</dbReference>
<dbReference type="GO" id="GO:0005737">
    <property type="term" value="C:cytoplasm"/>
    <property type="evidence" value="ECO:0007669"/>
    <property type="project" value="UniProtKB-SubCell"/>
</dbReference>
<dbReference type="GO" id="GO:0004239">
    <property type="term" value="F:initiator methionyl aminopeptidase activity"/>
    <property type="evidence" value="ECO:0007669"/>
    <property type="project" value="UniProtKB-UniRule"/>
</dbReference>
<dbReference type="GO" id="GO:0046872">
    <property type="term" value="F:metal ion binding"/>
    <property type="evidence" value="ECO:0007669"/>
    <property type="project" value="UniProtKB-UniRule"/>
</dbReference>
<dbReference type="GO" id="GO:0070006">
    <property type="term" value="F:metalloaminopeptidase activity"/>
    <property type="evidence" value="ECO:0007669"/>
    <property type="project" value="UniProtKB-UniRule"/>
</dbReference>
<dbReference type="GO" id="GO:0006508">
    <property type="term" value="P:proteolysis"/>
    <property type="evidence" value="ECO:0007669"/>
    <property type="project" value="UniProtKB-KW"/>
</dbReference>
<dbReference type="CDD" id="cd01088">
    <property type="entry name" value="MetAP2"/>
    <property type="match status" value="1"/>
</dbReference>
<dbReference type="Gene3D" id="3.90.230.10">
    <property type="entry name" value="Creatinase/methionine aminopeptidase superfamily"/>
    <property type="match status" value="1"/>
</dbReference>
<dbReference type="Gene3D" id="1.10.10.10">
    <property type="entry name" value="Winged helix-like DNA-binding domain superfamily/Winged helix DNA-binding domain"/>
    <property type="match status" value="1"/>
</dbReference>
<dbReference type="HAMAP" id="MF_03175">
    <property type="entry name" value="MetAP_2_euk"/>
    <property type="match status" value="1"/>
</dbReference>
<dbReference type="InterPro" id="IPR036005">
    <property type="entry name" value="Creatinase/aminopeptidase-like"/>
</dbReference>
<dbReference type="InterPro" id="IPR050247">
    <property type="entry name" value="Met_Aminopeptidase_Type2"/>
</dbReference>
<dbReference type="InterPro" id="IPR000994">
    <property type="entry name" value="Pept_M24"/>
</dbReference>
<dbReference type="InterPro" id="IPR002468">
    <property type="entry name" value="Pept_M24A_MAP2"/>
</dbReference>
<dbReference type="InterPro" id="IPR018349">
    <property type="entry name" value="Pept_M24A_MAP2_BS"/>
</dbReference>
<dbReference type="InterPro" id="IPR036388">
    <property type="entry name" value="WH-like_DNA-bd_sf"/>
</dbReference>
<dbReference type="InterPro" id="IPR036390">
    <property type="entry name" value="WH_DNA-bd_sf"/>
</dbReference>
<dbReference type="NCBIfam" id="TIGR00501">
    <property type="entry name" value="met_pdase_II"/>
    <property type="match status" value="1"/>
</dbReference>
<dbReference type="PANTHER" id="PTHR45777">
    <property type="entry name" value="METHIONINE AMINOPEPTIDASE 2"/>
    <property type="match status" value="1"/>
</dbReference>
<dbReference type="PANTHER" id="PTHR45777:SF2">
    <property type="entry name" value="METHIONINE AMINOPEPTIDASE 2"/>
    <property type="match status" value="1"/>
</dbReference>
<dbReference type="Pfam" id="PF00557">
    <property type="entry name" value="Peptidase_M24"/>
    <property type="match status" value="1"/>
</dbReference>
<dbReference type="SUPFAM" id="SSF55920">
    <property type="entry name" value="Creatinase/aminopeptidase"/>
    <property type="match status" value="1"/>
</dbReference>
<dbReference type="SUPFAM" id="SSF46785">
    <property type="entry name" value="Winged helix' DNA-binding domain"/>
    <property type="match status" value="1"/>
</dbReference>
<dbReference type="PROSITE" id="PS01202">
    <property type="entry name" value="MAP_2"/>
    <property type="match status" value="1"/>
</dbReference>
<organism>
    <name type="scientific">Encephalitozoon intestinalis (strain ATCC 50506)</name>
    <name type="common">Microsporidian parasite</name>
    <name type="synonym">Septata intestinalis</name>
    <dbReference type="NCBI Taxonomy" id="876142"/>
    <lineage>
        <taxon>Eukaryota</taxon>
        <taxon>Fungi</taxon>
        <taxon>Fungi incertae sedis</taxon>
        <taxon>Microsporidia</taxon>
        <taxon>Unikaryonidae</taxon>
        <taxon>Encephalitozoon</taxon>
    </lineage>
</organism>
<reference key="1">
    <citation type="journal article" date="2005" name="Folia Parasitol.">
        <title>Investigations into microsporidian methionine aminopeptidase type 2: a therapeutic target for microsporidiosis.</title>
        <authorList>
            <person name="Zhang H."/>
            <person name="Huang H."/>
            <person name="Cali A."/>
            <person name="Takvorian P.M."/>
            <person name="Feng X."/>
            <person name="Zhou G."/>
            <person name="Weiss L.M."/>
        </authorList>
    </citation>
    <scope>NUCLEOTIDE SEQUENCE [GENOMIC DNA]</scope>
    <source>
        <strain>CDC</strain>
    </source>
</reference>
<reference key="2">
    <citation type="journal article" date="2010" name="Nat. Commun.">
        <title>The complete sequence of the smallest known nuclear genome from the microsporidian Encephalitozoon intestinalis.</title>
        <authorList>
            <person name="Corradi N."/>
            <person name="Pombert J.-F."/>
            <person name="Farinelli L."/>
            <person name="Didier E.S."/>
            <person name="Keeling P.J."/>
        </authorList>
    </citation>
    <scope>NUCLEOTIDE SEQUENCE [LARGE SCALE GENOMIC DNA]</scope>
    <source>
        <strain>ATCC 50506</strain>
    </source>
</reference>
<reference key="3">
    <citation type="journal article" date="2005" name="Mol. Biochem. Parasitol.">
        <title>Phylogenetic relationships of methionine aminopeptidase 2 among Encephalitozoon species and genotypes of microsporidia.</title>
        <authorList>
            <person name="Pandrea I."/>
            <person name="Mittleider D."/>
            <person name="Brindley P.J."/>
            <person name="Didier E.S."/>
            <person name="Robertson D.L."/>
        </authorList>
    </citation>
    <scope>NUCLEOTIDE SEQUENCE [GENOMIC DNA] OF 14-331</scope>
    <source>
        <strain>ATCC 50506</strain>
    </source>
</reference>
<name>MAP2_ENCIT</name>
<gene>
    <name evidence="1" type="primary">MAP2</name>
</gene>
<accession>Q6XMH7</accession>
<accession>E0S9L1</accession>
<accession>Q6VH15</accession>
<keyword id="KW-0031">Aminopeptidase</keyword>
<keyword id="KW-0963">Cytoplasm</keyword>
<keyword id="KW-0378">Hydrolase</keyword>
<keyword id="KW-0479">Metal-binding</keyword>
<keyword id="KW-0645">Protease</keyword>
<protein>
    <recommendedName>
        <fullName evidence="1">Methionine aminopeptidase 2</fullName>
        <shortName evidence="1">MAP 2</shortName>
        <shortName evidence="1">MetAP 2</shortName>
        <ecNumber evidence="1">3.4.11.18</ecNumber>
    </recommendedName>
    <alternativeName>
        <fullName evidence="1">Peptidase M</fullName>
    </alternativeName>
</protein>
<sequence length="358" mass="40058">MKFILIDQAPELPIEFLPKGDCYRKGRLFGPKGEEIENTTDCDLLQDARRAAEAHRRARYKVQSIIRPGITLLEIVRSIEDSTRTLLEGERNNGIGFPAGMSMNSCAAHYTVNPGEEDIVLKEDDVLKVDFGTHSNGRIMDSAFTVAFQENLQPLLMAAREGTETGIRSLGIDARVCDIGRDINEVITSYEVEIEGKTWPIRPVSDLHGHSISQFKIHGGISIPAVNNRDTTRIKGDTFYAVETFATTGKGFINDRSPCSHFMLNVHKSRKLFNKDLIKVYEFVKSSFGTLPFSPRHLDHYNLVEGGSLKSVNLLTMMGLFTPYPPLNDIDGSKVAQFEHTVYLSENGKEILTRGDDY</sequence>
<feature type="chain" id="PRO_0000148987" description="Methionine aminopeptidase 2">
    <location>
        <begin position="1"/>
        <end position="358"/>
    </location>
</feature>
<feature type="binding site" evidence="1">
    <location>
        <position position="109"/>
    </location>
    <ligand>
        <name>substrate</name>
    </ligand>
</feature>
<feature type="binding site" evidence="1">
    <location>
        <position position="130"/>
    </location>
    <ligand>
        <name>a divalent metal cation</name>
        <dbReference type="ChEBI" id="CHEBI:60240"/>
        <label>1</label>
    </ligand>
</feature>
<feature type="binding site" evidence="1">
    <location>
        <position position="141"/>
    </location>
    <ligand>
        <name>a divalent metal cation</name>
        <dbReference type="ChEBI" id="CHEBI:60240"/>
        <label>1</label>
    </ligand>
</feature>
<feature type="binding site" evidence="1">
    <location>
        <position position="141"/>
    </location>
    <ligand>
        <name>a divalent metal cation</name>
        <dbReference type="ChEBI" id="CHEBI:60240"/>
        <label>2</label>
        <note>catalytic</note>
    </ligand>
</feature>
<feature type="binding site" evidence="1">
    <location>
        <position position="210"/>
    </location>
    <ligand>
        <name>a divalent metal cation</name>
        <dbReference type="ChEBI" id="CHEBI:60240"/>
        <label>2</label>
        <note>catalytic</note>
    </ligand>
</feature>
<feature type="binding site" evidence="1">
    <location>
        <position position="218"/>
    </location>
    <ligand>
        <name>substrate</name>
    </ligand>
</feature>
<feature type="binding site" evidence="1">
    <location>
        <position position="243"/>
    </location>
    <ligand>
        <name>a divalent metal cation</name>
        <dbReference type="ChEBI" id="CHEBI:60240"/>
        <label>2</label>
        <note>catalytic</note>
    </ligand>
</feature>
<feature type="binding site" evidence="1">
    <location>
        <position position="339"/>
    </location>
    <ligand>
        <name>a divalent metal cation</name>
        <dbReference type="ChEBI" id="CHEBI:60240"/>
        <label>1</label>
    </ligand>
</feature>
<feature type="binding site" evidence="1">
    <location>
        <position position="339"/>
    </location>
    <ligand>
        <name>a divalent metal cation</name>
        <dbReference type="ChEBI" id="CHEBI:60240"/>
        <label>2</label>
        <note>catalytic</note>
    </ligand>
</feature>
<feature type="sequence conflict" description="In Ref. 1; AAP51022." evidence="2" ref="1">
    <original>E</original>
    <variation>K</variation>
    <location>
        <position position="11"/>
    </location>
</feature>
<feature type="sequence conflict" description="In Ref. 1; AAP51022." evidence="2" ref="1">
    <original>R</original>
    <variation>K</variation>
    <location>
        <position position="24"/>
    </location>
</feature>
<feature type="sequence conflict" description="In Ref. 1; AAP51022." evidence="2" ref="1">
    <original>R</original>
    <variation>K</variation>
    <location>
        <position position="27"/>
    </location>
</feature>
<proteinExistence type="inferred from homology"/>
<comment type="function">
    <text evidence="1">Cotranslationally removes the N-terminal methionine from nascent proteins. The N-terminal methionine is often cleaved when the second residue in the primary sequence is small and uncharged (Met-Ala-, Cys, Gly, Pro, Ser, Thr, or Val).</text>
</comment>
<comment type="catalytic activity">
    <reaction evidence="1">
        <text>Release of N-terminal amino acids, preferentially methionine, from peptides and arylamides.</text>
        <dbReference type="EC" id="3.4.11.18"/>
    </reaction>
</comment>
<comment type="cofactor">
    <cofactor evidence="1">
        <name>Co(2+)</name>
        <dbReference type="ChEBI" id="CHEBI:48828"/>
    </cofactor>
    <cofactor evidence="1">
        <name>Zn(2+)</name>
        <dbReference type="ChEBI" id="CHEBI:29105"/>
    </cofactor>
    <cofactor evidence="1">
        <name>Mn(2+)</name>
        <dbReference type="ChEBI" id="CHEBI:29035"/>
    </cofactor>
    <cofactor evidence="1">
        <name>Fe(2+)</name>
        <dbReference type="ChEBI" id="CHEBI:29033"/>
    </cofactor>
    <text evidence="1">Binds 2 divalent metal cations per subunit. Has a high-affinity and a low affinity metal-binding site. The true nature of the physiological cofactor is under debate. The enzyme is active with cobalt, zinc, manganese or divalent iron ions. Most likely, methionine aminopeptidases function as mononuclear Fe(2+)-metalloproteases under physiological conditions, and the catalytically relevant metal-binding site has been assigned to the histidine-containing high-affinity site.</text>
</comment>
<comment type="subcellular location">
    <subcellularLocation>
        <location evidence="1">Cytoplasm</location>
    </subcellularLocation>
</comment>
<comment type="similarity">
    <text evidence="1">Belongs to the peptidase M24A family. Methionine aminopeptidase eukaryotic type 2 subfamily.</text>
</comment>